<protein>
    <recommendedName>
        <fullName>Subtilisin-like protease 2</fullName>
        <ecNumber>3.4.21.-</ecNumber>
    </recommendedName>
</protein>
<keyword id="KW-0325">Glycoprotein</keyword>
<keyword id="KW-0378">Hydrolase</keyword>
<keyword id="KW-0645">Protease</keyword>
<keyword id="KW-0964">Secreted</keyword>
<keyword id="KW-0720">Serine protease</keyword>
<keyword id="KW-0732">Signal</keyword>
<keyword id="KW-0843">Virulence</keyword>
<keyword id="KW-0865">Zymogen</keyword>
<proteinExistence type="inferred from homology"/>
<organism>
    <name type="scientific">Trichophyton tonsurans</name>
    <name type="common">Scalp ringworm fungus</name>
    <dbReference type="NCBI Taxonomy" id="34387"/>
    <lineage>
        <taxon>Eukaryota</taxon>
        <taxon>Fungi</taxon>
        <taxon>Dikarya</taxon>
        <taxon>Ascomycota</taxon>
        <taxon>Pezizomycotina</taxon>
        <taxon>Eurotiomycetes</taxon>
        <taxon>Eurotiomycetidae</taxon>
        <taxon>Onygenales</taxon>
        <taxon>Arthrodermataceae</taxon>
        <taxon>Trichophyton</taxon>
    </lineage>
</organism>
<evidence type="ECO:0000250" key="1"/>
<evidence type="ECO:0000255" key="2"/>
<evidence type="ECO:0000255" key="3">
    <source>
        <dbReference type="PROSITE-ProRule" id="PRU01240"/>
    </source>
</evidence>
<evidence type="ECO:0000305" key="4"/>
<name>SUB2_TRITO</name>
<sequence length="421" mass="45610">MQLLNFGLLLLPFVAGDLAPQPEPLLAGPSDVVPGQYIVTLKEGLTSAQIRDHKKWVSSVHRANLEGFAAGASGVETEGIMKHFHIHDLNMYSGGFDEKTVEDLSRNPYVKSVHPDQHVYLAKTVTQRQARWGLGYMSSKGKPVPLHSTLVDYSYDDKAGEGVWAYVLDTGINVNHVEFEGRAILGHNAIPNKPHTDEFGHGTYVAGIIAGKTYGVAKKANVVSAKAFDTGSSTYNYILETYDWIVRNITDSNRKNKAVINFSISGAKYQPFDDAVEKAFKAGIATVVAAGNDGKDAKNNTPASSPNAITVGAVRWENTRPSFSNYGKIVDIWAPGELIKSCWKGGNNATSTQSGTSAASPHVAGLVAYLMSTENLPSPSAVTARVLNLTIPNLVKDAKDSPNRVVYNGIQERKFTLPKYF</sequence>
<comment type="function">
    <text evidence="1">Secreted subtilisin-like serine protease with keratinolytic activity that contributes to pathogenicity.</text>
</comment>
<comment type="subcellular location">
    <subcellularLocation>
        <location evidence="1">Secreted</location>
    </subcellularLocation>
</comment>
<comment type="similarity">
    <text evidence="4">Belongs to the peptidase S8 family.</text>
</comment>
<comment type="sequence caution" evidence="4">
    <conflict type="erroneous initiation">
        <sequence resource="EMBL-CDS" id="ACL37327"/>
    </conflict>
</comment>
<accession>B8XGQ5</accession>
<dbReference type="EC" id="3.4.21.-"/>
<dbReference type="EMBL" id="FJ348237">
    <property type="protein sequence ID" value="ACL37327.1"/>
    <property type="status" value="ALT_INIT"/>
    <property type="molecule type" value="Genomic_DNA"/>
</dbReference>
<dbReference type="SMR" id="B8XGQ5"/>
<dbReference type="GlyCosmos" id="B8XGQ5">
    <property type="glycosylation" value="4 sites, No reported glycans"/>
</dbReference>
<dbReference type="VEuPathDB" id="FungiDB:TESG_05168"/>
<dbReference type="GO" id="GO:0005576">
    <property type="term" value="C:extracellular region"/>
    <property type="evidence" value="ECO:0007669"/>
    <property type="project" value="UniProtKB-SubCell"/>
</dbReference>
<dbReference type="GO" id="GO:0004252">
    <property type="term" value="F:serine-type endopeptidase activity"/>
    <property type="evidence" value="ECO:0007669"/>
    <property type="project" value="InterPro"/>
</dbReference>
<dbReference type="GO" id="GO:0006508">
    <property type="term" value="P:proteolysis"/>
    <property type="evidence" value="ECO:0007669"/>
    <property type="project" value="UniProtKB-KW"/>
</dbReference>
<dbReference type="CDD" id="cd04077">
    <property type="entry name" value="Peptidases_S8_PCSK9_ProteinaseK_like"/>
    <property type="match status" value="1"/>
</dbReference>
<dbReference type="FunFam" id="3.40.50.200:FF:000007">
    <property type="entry name" value="Subtilisin-like serine protease"/>
    <property type="match status" value="1"/>
</dbReference>
<dbReference type="Gene3D" id="3.30.70.80">
    <property type="entry name" value="Peptidase S8 propeptide/proteinase inhibitor I9"/>
    <property type="match status" value="1"/>
</dbReference>
<dbReference type="Gene3D" id="3.40.50.200">
    <property type="entry name" value="Peptidase S8/S53 domain"/>
    <property type="match status" value="1"/>
</dbReference>
<dbReference type="InterPro" id="IPR034193">
    <property type="entry name" value="PCSK9_ProteinaseK-like"/>
</dbReference>
<dbReference type="InterPro" id="IPR000209">
    <property type="entry name" value="Peptidase_S8/S53_dom"/>
</dbReference>
<dbReference type="InterPro" id="IPR036852">
    <property type="entry name" value="Peptidase_S8/S53_dom_sf"/>
</dbReference>
<dbReference type="InterPro" id="IPR023827">
    <property type="entry name" value="Peptidase_S8_Asp-AS"/>
</dbReference>
<dbReference type="InterPro" id="IPR022398">
    <property type="entry name" value="Peptidase_S8_His-AS"/>
</dbReference>
<dbReference type="InterPro" id="IPR023828">
    <property type="entry name" value="Peptidase_S8_Ser-AS"/>
</dbReference>
<dbReference type="InterPro" id="IPR050131">
    <property type="entry name" value="Peptidase_S8_subtilisin-like"/>
</dbReference>
<dbReference type="InterPro" id="IPR015500">
    <property type="entry name" value="Peptidase_S8_subtilisin-rel"/>
</dbReference>
<dbReference type="InterPro" id="IPR010259">
    <property type="entry name" value="S8pro/Inhibitor_I9"/>
</dbReference>
<dbReference type="InterPro" id="IPR037045">
    <property type="entry name" value="S8pro/Inhibitor_I9_sf"/>
</dbReference>
<dbReference type="PANTHER" id="PTHR43806:SF58">
    <property type="entry name" value="ALKALINE PROTEASE 1-RELATED"/>
    <property type="match status" value="1"/>
</dbReference>
<dbReference type="PANTHER" id="PTHR43806">
    <property type="entry name" value="PEPTIDASE S8"/>
    <property type="match status" value="1"/>
</dbReference>
<dbReference type="Pfam" id="PF05922">
    <property type="entry name" value="Inhibitor_I9"/>
    <property type="match status" value="1"/>
</dbReference>
<dbReference type="Pfam" id="PF00082">
    <property type="entry name" value="Peptidase_S8"/>
    <property type="match status" value="1"/>
</dbReference>
<dbReference type="PRINTS" id="PR00723">
    <property type="entry name" value="SUBTILISIN"/>
</dbReference>
<dbReference type="SUPFAM" id="SSF52743">
    <property type="entry name" value="Subtilisin-like"/>
    <property type="match status" value="1"/>
</dbReference>
<dbReference type="PROSITE" id="PS51892">
    <property type="entry name" value="SUBTILASE"/>
    <property type="match status" value="1"/>
</dbReference>
<dbReference type="PROSITE" id="PS00136">
    <property type="entry name" value="SUBTILASE_ASP"/>
    <property type="match status" value="1"/>
</dbReference>
<dbReference type="PROSITE" id="PS00137">
    <property type="entry name" value="SUBTILASE_HIS"/>
    <property type="match status" value="1"/>
</dbReference>
<dbReference type="PROSITE" id="PS00138">
    <property type="entry name" value="SUBTILASE_SER"/>
    <property type="match status" value="1"/>
</dbReference>
<reference key="1">
    <citation type="submission" date="2008-10" db="EMBL/GenBank/DDBJ databases">
        <title>Comparing putative pathogenicity factors between Trichophyton tonsurans and Trichophyton equinum.</title>
        <authorList>
            <person name="Preuett B.L."/>
            <person name="Abdel-Rahman S.M."/>
        </authorList>
    </citation>
    <scope>NUCLEOTIDE SEQUENCE [GENOMIC DNA]</scope>
</reference>
<gene>
    <name type="primary">SUB2</name>
</gene>
<feature type="signal peptide" evidence="2">
    <location>
        <begin position="1"/>
        <end position="16"/>
    </location>
</feature>
<feature type="propeptide" id="PRO_0000380772" evidence="1">
    <location>
        <begin position="17"/>
        <end position="122"/>
    </location>
</feature>
<feature type="chain" id="PRO_0000380773" description="Subtilisin-like protease 2">
    <location>
        <begin position="123"/>
        <end position="421"/>
    </location>
</feature>
<feature type="domain" description="Inhibitor I9" evidence="2">
    <location>
        <begin position="36"/>
        <end position="122"/>
    </location>
</feature>
<feature type="domain" description="Peptidase S8" evidence="3">
    <location>
        <begin position="131"/>
        <end position="421"/>
    </location>
</feature>
<feature type="active site" description="Charge relay system" evidence="3">
    <location>
        <position position="169"/>
    </location>
</feature>
<feature type="active site" description="Charge relay system" evidence="3">
    <location>
        <position position="201"/>
    </location>
</feature>
<feature type="active site" description="Charge relay system" evidence="3">
    <location>
        <position position="357"/>
    </location>
</feature>
<feature type="glycosylation site" description="N-linked (GlcNAc...) asparagine" evidence="2">
    <location>
        <position position="248"/>
    </location>
</feature>
<feature type="glycosylation site" description="N-linked (GlcNAc...) asparagine" evidence="2">
    <location>
        <position position="261"/>
    </location>
</feature>
<feature type="glycosylation site" description="N-linked (GlcNAc...) asparagine" evidence="2">
    <location>
        <position position="348"/>
    </location>
</feature>
<feature type="glycosylation site" description="N-linked (GlcNAc...) asparagine" evidence="2">
    <location>
        <position position="388"/>
    </location>
</feature>